<dbReference type="EMBL" id="CP000260">
    <property type="protein sequence ID" value="ABF33122.1"/>
    <property type="molecule type" value="Genomic_DNA"/>
</dbReference>
<dbReference type="RefSeq" id="WP_002986636.1">
    <property type="nucleotide sequence ID" value="NZ_CVUH01000001.1"/>
</dbReference>
<dbReference type="SMR" id="Q1JJ51"/>
<dbReference type="GeneID" id="69900037"/>
<dbReference type="KEGG" id="sph:MGAS10270_Spy0057"/>
<dbReference type="HOGENOM" id="CLU_093315_2_0_9"/>
<dbReference type="Proteomes" id="UP000002436">
    <property type="component" value="Chromosome"/>
</dbReference>
<dbReference type="GO" id="GO:1990904">
    <property type="term" value="C:ribonucleoprotein complex"/>
    <property type="evidence" value="ECO:0007669"/>
    <property type="project" value="UniProtKB-KW"/>
</dbReference>
<dbReference type="GO" id="GO:0005840">
    <property type="term" value="C:ribosome"/>
    <property type="evidence" value="ECO:0007669"/>
    <property type="project" value="UniProtKB-KW"/>
</dbReference>
<dbReference type="GO" id="GO:0019843">
    <property type="term" value="F:rRNA binding"/>
    <property type="evidence" value="ECO:0007669"/>
    <property type="project" value="UniProtKB-UniRule"/>
</dbReference>
<dbReference type="GO" id="GO:0003735">
    <property type="term" value="F:structural constituent of ribosome"/>
    <property type="evidence" value="ECO:0007669"/>
    <property type="project" value="InterPro"/>
</dbReference>
<dbReference type="GO" id="GO:0006412">
    <property type="term" value="P:translation"/>
    <property type="evidence" value="ECO:0007669"/>
    <property type="project" value="UniProtKB-UniRule"/>
</dbReference>
<dbReference type="CDD" id="cd06089">
    <property type="entry name" value="KOW_RPL26"/>
    <property type="match status" value="1"/>
</dbReference>
<dbReference type="FunFam" id="2.30.30.30:FF:000004">
    <property type="entry name" value="50S ribosomal protein L24"/>
    <property type="match status" value="1"/>
</dbReference>
<dbReference type="Gene3D" id="2.30.30.30">
    <property type="match status" value="1"/>
</dbReference>
<dbReference type="HAMAP" id="MF_01326_B">
    <property type="entry name" value="Ribosomal_uL24_B"/>
    <property type="match status" value="1"/>
</dbReference>
<dbReference type="InterPro" id="IPR005824">
    <property type="entry name" value="KOW"/>
</dbReference>
<dbReference type="InterPro" id="IPR014722">
    <property type="entry name" value="Rib_uL2_dom2"/>
</dbReference>
<dbReference type="InterPro" id="IPR003256">
    <property type="entry name" value="Ribosomal_uL24"/>
</dbReference>
<dbReference type="InterPro" id="IPR005825">
    <property type="entry name" value="Ribosomal_uL24_CS"/>
</dbReference>
<dbReference type="InterPro" id="IPR041988">
    <property type="entry name" value="Ribosomal_uL24_KOW"/>
</dbReference>
<dbReference type="InterPro" id="IPR008991">
    <property type="entry name" value="Translation_prot_SH3-like_sf"/>
</dbReference>
<dbReference type="NCBIfam" id="TIGR01079">
    <property type="entry name" value="rplX_bact"/>
    <property type="match status" value="1"/>
</dbReference>
<dbReference type="PANTHER" id="PTHR12903">
    <property type="entry name" value="MITOCHONDRIAL RIBOSOMAL PROTEIN L24"/>
    <property type="match status" value="1"/>
</dbReference>
<dbReference type="Pfam" id="PF00467">
    <property type="entry name" value="KOW"/>
    <property type="match status" value="1"/>
</dbReference>
<dbReference type="Pfam" id="PF17136">
    <property type="entry name" value="ribosomal_L24"/>
    <property type="match status" value="1"/>
</dbReference>
<dbReference type="SMART" id="SM00739">
    <property type="entry name" value="KOW"/>
    <property type="match status" value="1"/>
</dbReference>
<dbReference type="SUPFAM" id="SSF50104">
    <property type="entry name" value="Translation proteins SH3-like domain"/>
    <property type="match status" value="1"/>
</dbReference>
<dbReference type="PROSITE" id="PS01108">
    <property type="entry name" value="RIBOSOMAL_L24"/>
    <property type="match status" value="1"/>
</dbReference>
<name>RL24_STRPD</name>
<evidence type="ECO:0000255" key="1">
    <source>
        <dbReference type="HAMAP-Rule" id="MF_01326"/>
    </source>
</evidence>
<evidence type="ECO:0000305" key="2"/>
<sequence>MFVKKGDKVRVIAGKDKGTEAVVLKALPKVNKVIVEGVGMIKKHQKPNTENPQGAIVEKEAPIHVSNVQVLDKNGVAGRVGYKVVDGKKVRYSKKSGEVLD</sequence>
<reference key="1">
    <citation type="journal article" date="2006" name="Proc. Natl. Acad. Sci. U.S.A.">
        <title>Molecular genetic anatomy of inter- and intraserotype variation in the human bacterial pathogen group A Streptococcus.</title>
        <authorList>
            <person name="Beres S.B."/>
            <person name="Richter E.W."/>
            <person name="Nagiec M.J."/>
            <person name="Sumby P."/>
            <person name="Porcella S.F."/>
            <person name="DeLeo F.R."/>
            <person name="Musser J.M."/>
        </authorList>
    </citation>
    <scope>NUCLEOTIDE SEQUENCE [LARGE SCALE GENOMIC DNA]</scope>
    <source>
        <strain>MGAS10270</strain>
    </source>
</reference>
<accession>Q1JJ51</accession>
<feature type="chain" id="PRO_1000052322" description="Large ribosomal subunit protein uL24">
    <location>
        <begin position="1"/>
        <end position="101"/>
    </location>
</feature>
<organism>
    <name type="scientific">Streptococcus pyogenes serotype M2 (strain MGAS10270)</name>
    <dbReference type="NCBI Taxonomy" id="370552"/>
    <lineage>
        <taxon>Bacteria</taxon>
        <taxon>Bacillati</taxon>
        <taxon>Bacillota</taxon>
        <taxon>Bacilli</taxon>
        <taxon>Lactobacillales</taxon>
        <taxon>Streptococcaceae</taxon>
        <taxon>Streptococcus</taxon>
    </lineage>
</organism>
<keyword id="KW-0687">Ribonucleoprotein</keyword>
<keyword id="KW-0689">Ribosomal protein</keyword>
<keyword id="KW-0694">RNA-binding</keyword>
<keyword id="KW-0699">rRNA-binding</keyword>
<comment type="function">
    <text evidence="1">One of two assembly initiator proteins, it binds directly to the 5'-end of the 23S rRNA, where it nucleates assembly of the 50S subunit.</text>
</comment>
<comment type="function">
    <text evidence="1">One of the proteins that surrounds the polypeptide exit tunnel on the outside of the subunit.</text>
</comment>
<comment type="subunit">
    <text evidence="1">Part of the 50S ribosomal subunit.</text>
</comment>
<comment type="similarity">
    <text evidence="1">Belongs to the universal ribosomal protein uL24 family.</text>
</comment>
<protein>
    <recommendedName>
        <fullName evidence="1">Large ribosomal subunit protein uL24</fullName>
    </recommendedName>
    <alternativeName>
        <fullName evidence="2">50S ribosomal protein L24</fullName>
    </alternativeName>
</protein>
<proteinExistence type="inferred from homology"/>
<gene>
    <name evidence="1" type="primary">rplX</name>
    <name type="ordered locus">MGAS10270_Spy0057</name>
</gene>